<proteinExistence type="inferred from homology"/>
<keyword id="KW-0067">ATP-binding</keyword>
<keyword id="KW-0460">Magnesium</keyword>
<keyword id="KW-0479">Metal-binding</keyword>
<keyword id="KW-0547">Nucleotide-binding</keyword>
<keyword id="KW-0548">Nucleotidyltransferase</keyword>
<keyword id="KW-1185">Reference proteome</keyword>
<keyword id="KW-0692">RNA repair</keyword>
<keyword id="KW-0694">RNA-binding</keyword>
<keyword id="KW-0808">Transferase</keyword>
<keyword id="KW-0819">tRNA processing</keyword>
<sequence length="402" mass="46234">MKLMTMPSEFQKALPILTKIKEAGYEAYFVGGSVRDVLLERPIHDVDIATSSYPEETKAIFNRTVDVGIEHGTVLVLENGGEYEITTFRTEDIYVDYRRPSQVSFVRSLEEDLKRRDFTVNALALDENGQVIDKFRGLIDLKQKRLRAVGKAEERFEEDALRIMRGFRFAASLDFDIEAITFEAMRSHSPLLEKISVERSFTEFDKLLMAPHWRKGISAMIACQAYDYLPGLKQQEAGLNHLIVSLKDNFTFSDYHQAWAYVMISLAIEDPKSFLKAWKTSNDFQRYVTKLIALYRIRQERSFEKLDIYQYGKKMASLVEDLRKAQSLSVDMDRINTLDQALVIHDKHDIVLNGSHLIKDFGMKSGPQLGLMLEKVELAIVEGRLDNDFTTIEAFVREELAT</sequence>
<evidence type="ECO:0000255" key="1">
    <source>
        <dbReference type="HAMAP-Rule" id="MF_01263"/>
    </source>
</evidence>
<evidence type="ECO:0000305" key="2"/>
<protein>
    <recommendedName>
        <fullName evidence="1">CCA-adding enzyme</fullName>
        <ecNumber evidence="1">2.7.7.72</ecNumber>
    </recommendedName>
    <alternativeName>
        <fullName evidence="1">CCA tRNA nucleotidyltransferase</fullName>
    </alternativeName>
    <alternativeName>
        <fullName evidence="1">tRNA CCA-pyrophosphorylase</fullName>
    </alternativeName>
    <alternativeName>
        <fullName evidence="1">tRNA adenylyl-/cytidylyl- transferase</fullName>
    </alternativeName>
    <alternativeName>
        <fullName evidence="1">tRNA nucleotidyltransferase</fullName>
    </alternativeName>
    <alternativeName>
        <fullName evidence="1">tRNA-NT</fullName>
    </alternativeName>
</protein>
<gene>
    <name evidence="1" type="primary">cca</name>
    <name type="ordered locus">SPy_0866</name>
    <name type="ordered locus">M5005_Spy0673</name>
</gene>
<name>CCA_STRP1</name>
<organism>
    <name type="scientific">Streptococcus pyogenes serotype M1</name>
    <dbReference type="NCBI Taxonomy" id="301447"/>
    <lineage>
        <taxon>Bacteria</taxon>
        <taxon>Bacillati</taxon>
        <taxon>Bacillota</taxon>
        <taxon>Bacilli</taxon>
        <taxon>Lactobacillales</taxon>
        <taxon>Streptococcaceae</taxon>
        <taxon>Streptococcus</taxon>
    </lineage>
</organism>
<feature type="chain" id="PRO_0000139058" description="CCA-adding enzyme">
    <location>
        <begin position="1"/>
        <end position="402"/>
    </location>
</feature>
<feature type="binding site" evidence="1">
    <location>
        <position position="32"/>
    </location>
    <ligand>
        <name>ATP</name>
        <dbReference type="ChEBI" id="CHEBI:30616"/>
    </ligand>
</feature>
<feature type="binding site" evidence="1">
    <location>
        <position position="32"/>
    </location>
    <ligand>
        <name>CTP</name>
        <dbReference type="ChEBI" id="CHEBI:37563"/>
    </ligand>
</feature>
<feature type="binding site" evidence="1">
    <location>
        <position position="35"/>
    </location>
    <ligand>
        <name>ATP</name>
        <dbReference type="ChEBI" id="CHEBI:30616"/>
    </ligand>
</feature>
<feature type="binding site" evidence="1">
    <location>
        <position position="35"/>
    </location>
    <ligand>
        <name>CTP</name>
        <dbReference type="ChEBI" id="CHEBI:37563"/>
    </ligand>
</feature>
<feature type="binding site" evidence="1">
    <location>
        <position position="45"/>
    </location>
    <ligand>
        <name>Mg(2+)</name>
        <dbReference type="ChEBI" id="CHEBI:18420"/>
    </ligand>
</feature>
<feature type="binding site" evidence="1">
    <location>
        <position position="47"/>
    </location>
    <ligand>
        <name>Mg(2+)</name>
        <dbReference type="ChEBI" id="CHEBI:18420"/>
    </ligand>
</feature>
<feature type="binding site" evidence="1">
    <location>
        <position position="116"/>
    </location>
    <ligand>
        <name>ATP</name>
        <dbReference type="ChEBI" id="CHEBI:30616"/>
    </ligand>
</feature>
<feature type="binding site" evidence="1">
    <location>
        <position position="116"/>
    </location>
    <ligand>
        <name>CTP</name>
        <dbReference type="ChEBI" id="CHEBI:37563"/>
    </ligand>
</feature>
<feature type="binding site" evidence="1">
    <location>
        <position position="159"/>
    </location>
    <ligand>
        <name>ATP</name>
        <dbReference type="ChEBI" id="CHEBI:30616"/>
    </ligand>
</feature>
<feature type="binding site" evidence="1">
    <location>
        <position position="159"/>
    </location>
    <ligand>
        <name>CTP</name>
        <dbReference type="ChEBI" id="CHEBI:37563"/>
    </ligand>
</feature>
<feature type="binding site" evidence="1">
    <location>
        <position position="162"/>
    </location>
    <ligand>
        <name>ATP</name>
        <dbReference type="ChEBI" id="CHEBI:30616"/>
    </ligand>
</feature>
<feature type="binding site" evidence="1">
    <location>
        <position position="162"/>
    </location>
    <ligand>
        <name>CTP</name>
        <dbReference type="ChEBI" id="CHEBI:37563"/>
    </ligand>
</feature>
<feature type="binding site" evidence="1">
    <location>
        <position position="165"/>
    </location>
    <ligand>
        <name>ATP</name>
        <dbReference type="ChEBI" id="CHEBI:30616"/>
    </ligand>
</feature>
<feature type="binding site" evidence="1">
    <location>
        <position position="165"/>
    </location>
    <ligand>
        <name>CTP</name>
        <dbReference type="ChEBI" id="CHEBI:37563"/>
    </ligand>
</feature>
<feature type="binding site" evidence="1">
    <location>
        <position position="168"/>
    </location>
    <ligand>
        <name>ATP</name>
        <dbReference type="ChEBI" id="CHEBI:30616"/>
    </ligand>
</feature>
<feature type="binding site" evidence="1">
    <location>
        <position position="168"/>
    </location>
    <ligand>
        <name>CTP</name>
        <dbReference type="ChEBI" id="CHEBI:37563"/>
    </ligand>
</feature>
<accession>Q9A0A5</accession>
<accession>Q48ZC7</accession>
<comment type="function">
    <text evidence="1">Catalyzes the addition and repair of the essential 3'-terminal CCA sequence in tRNAs without using a nucleic acid template. Adds these three nucleotides in the order of C, C, and A to the tRNA nucleotide-73, using CTP and ATP as substrates and producing inorganic pyrophosphate. tRNA 3'-terminal CCA addition is required both for tRNA processing and repair. Also involved in tRNA surveillance by mediating tandem CCA addition to generate a CCACCA at the 3' terminus of unstable tRNAs. While stable tRNAs receive only 3'-terminal CCA, unstable tRNAs are marked with CCACCA and rapidly degraded.</text>
</comment>
<comment type="catalytic activity">
    <reaction evidence="1">
        <text>a tRNA precursor + 2 CTP + ATP = a tRNA with a 3' CCA end + 3 diphosphate</text>
        <dbReference type="Rhea" id="RHEA:14433"/>
        <dbReference type="Rhea" id="RHEA-COMP:10465"/>
        <dbReference type="Rhea" id="RHEA-COMP:10468"/>
        <dbReference type="ChEBI" id="CHEBI:30616"/>
        <dbReference type="ChEBI" id="CHEBI:33019"/>
        <dbReference type="ChEBI" id="CHEBI:37563"/>
        <dbReference type="ChEBI" id="CHEBI:74896"/>
        <dbReference type="ChEBI" id="CHEBI:83071"/>
        <dbReference type="EC" id="2.7.7.72"/>
    </reaction>
</comment>
<comment type="catalytic activity">
    <reaction evidence="1">
        <text>a tRNA with a 3' CCA end + 2 CTP + ATP = a tRNA with a 3' CCACCA end + 3 diphosphate</text>
        <dbReference type="Rhea" id="RHEA:76235"/>
        <dbReference type="Rhea" id="RHEA-COMP:10468"/>
        <dbReference type="Rhea" id="RHEA-COMP:18655"/>
        <dbReference type="ChEBI" id="CHEBI:30616"/>
        <dbReference type="ChEBI" id="CHEBI:33019"/>
        <dbReference type="ChEBI" id="CHEBI:37563"/>
        <dbReference type="ChEBI" id="CHEBI:83071"/>
        <dbReference type="ChEBI" id="CHEBI:195187"/>
    </reaction>
    <physiologicalReaction direction="left-to-right" evidence="1">
        <dbReference type="Rhea" id="RHEA:76236"/>
    </physiologicalReaction>
</comment>
<comment type="cofactor">
    <cofactor evidence="1">
        <name>Mg(2+)</name>
        <dbReference type="ChEBI" id="CHEBI:18420"/>
    </cofactor>
</comment>
<comment type="subunit">
    <text evidence="1">Homodimer.</text>
</comment>
<comment type="miscellaneous">
    <text evidence="1">A single active site specifically recognizes both ATP and CTP and is responsible for their addition.</text>
</comment>
<comment type="similarity">
    <text evidence="1">Belongs to the tRNA nucleotidyltransferase/poly(A) polymerase family. Bacterial CCA-adding enzyme type 3 subfamily.</text>
</comment>
<comment type="sequence caution" evidence="2">
    <conflict type="erroneous initiation">
        <sequence resource="EMBL-CDS" id="AAK33789"/>
    </conflict>
</comment>
<reference key="1">
    <citation type="journal article" date="2001" name="Proc. Natl. Acad. Sci. U.S.A.">
        <title>Complete genome sequence of an M1 strain of Streptococcus pyogenes.</title>
        <authorList>
            <person name="Ferretti J.J."/>
            <person name="McShan W.M."/>
            <person name="Ajdic D.J."/>
            <person name="Savic D.J."/>
            <person name="Savic G."/>
            <person name="Lyon K."/>
            <person name="Primeaux C."/>
            <person name="Sezate S."/>
            <person name="Suvorov A.N."/>
            <person name="Kenton S."/>
            <person name="Lai H.S."/>
            <person name="Lin S.P."/>
            <person name="Qian Y."/>
            <person name="Jia H.G."/>
            <person name="Najar F.Z."/>
            <person name="Ren Q."/>
            <person name="Zhu H."/>
            <person name="Song L."/>
            <person name="White J."/>
            <person name="Yuan X."/>
            <person name="Clifton S.W."/>
            <person name="Roe B.A."/>
            <person name="McLaughlin R.E."/>
        </authorList>
    </citation>
    <scope>NUCLEOTIDE SEQUENCE [LARGE SCALE GENOMIC DNA]</scope>
    <source>
        <strain>ATCC 700294 / SF370 / Serotype M1</strain>
    </source>
</reference>
<reference key="2">
    <citation type="journal article" date="2005" name="J. Infect. Dis.">
        <title>Evolutionary origin and emergence of a highly successful clone of serotype M1 group A Streptococcus involved multiple horizontal gene transfer events.</title>
        <authorList>
            <person name="Sumby P."/>
            <person name="Porcella S.F."/>
            <person name="Madrigal A.G."/>
            <person name="Barbian K.D."/>
            <person name="Virtaneva K."/>
            <person name="Ricklefs S.M."/>
            <person name="Sturdevant D.E."/>
            <person name="Graham M.R."/>
            <person name="Vuopio-Varkila J."/>
            <person name="Hoe N.P."/>
            <person name="Musser J.M."/>
        </authorList>
    </citation>
    <scope>NUCLEOTIDE SEQUENCE [LARGE SCALE GENOMIC DNA]</scope>
    <source>
        <strain>ATCC BAA-947 / MGAS5005 / Serotype M1</strain>
    </source>
</reference>
<dbReference type="EC" id="2.7.7.72" evidence="1"/>
<dbReference type="EMBL" id="AE004092">
    <property type="protein sequence ID" value="AAK33789.1"/>
    <property type="status" value="ALT_INIT"/>
    <property type="molecule type" value="Genomic_DNA"/>
</dbReference>
<dbReference type="EMBL" id="CP000017">
    <property type="protein sequence ID" value="AAZ51291.1"/>
    <property type="molecule type" value="Genomic_DNA"/>
</dbReference>
<dbReference type="RefSeq" id="NP_269068.1">
    <property type="nucleotide sequence ID" value="NC_002737.2"/>
</dbReference>
<dbReference type="SMR" id="Q9A0A5"/>
<dbReference type="PaxDb" id="1314-HKU360_00683"/>
<dbReference type="KEGG" id="spy:SPy_0866"/>
<dbReference type="KEGG" id="spz:M5005_Spy0673"/>
<dbReference type="PATRIC" id="fig|160490.10.peg.743"/>
<dbReference type="HOGENOM" id="CLU_015961_3_0_9"/>
<dbReference type="OMA" id="WKNSNAM"/>
<dbReference type="Proteomes" id="UP000000750">
    <property type="component" value="Chromosome"/>
</dbReference>
<dbReference type="GO" id="GO:0005524">
    <property type="term" value="F:ATP binding"/>
    <property type="evidence" value="ECO:0007669"/>
    <property type="project" value="UniProtKB-UniRule"/>
</dbReference>
<dbReference type="GO" id="GO:0004810">
    <property type="term" value="F:CCA tRNA nucleotidyltransferase activity"/>
    <property type="evidence" value="ECO:0007669"/>
    <property type="project" value="UniProtKB-UniRule"/>
</dbReference>
<dbReference type="GO" id="GO:0000287">
    <property type="term" value="F:magnesium ion binding"/>
    <property type="evidence" value="ECO:0007669"/>
    <property type="project" value="UniProtKB-UniRule"/>
</dbReference>
<dbReference type="GO" id="GO:0000049">
    <property type="term" value="F:tRNA binding"/>
    <property type="evidence" value="ECO:0007669"/>
    <property type="project" value="UniProtKB-UniRule"/>
</dbReference>
<dbReference type="GO" id="GO:0042245">
    <property type="term" value="P:RNA repair"/>
    <property type="evidence" value="ECO:0007669"/>
    <property type="project" value="UniProtKB-KW"/>
</dbReference>
<dbReference type="GO" id="GO:0001680">
    <property type="term" value="P:tRNA 3'-terminal CCA addition"/>
    <property type="evidence" value="ECO:0007669"/>
    <property type="project" value="UniProtKB-UniRule"/>
</dbReference>
<dbReference type="CDD" id="cd05398">
    <property type="entry name" value="NT_ClassII-CCAase"/>
    <property type="match status" value="1"/>
</dbReference>
<dbReference type="Gene3D" id="1.10.110.30">
    <property type="match status" value="1"/>
</dbReference>
<dbReference type="Gene3D" id="1.10.246.80">
    <property type="match status" value="1"/>
</dbReference>
<dbReference type="Gene3D" id="1.20.58.560">
    <property type="match status" value="1"/>
</dbReference>
<dbReference type="Gene3D" id="3.30.460.10">
    <property type="entry name" value="Beta Polymerase, domain 2"/>
    <property type="match status" value="1"/>
</dbReference>
<dbReference type="HAMAP" id="MF_01263">
    <property type="entry name" value="CCA_bact_type3"/>
    <property type="match status" value="1"/>
</dbReference>
<dbReference type="InterPro" id="IPR050264">
    <property type="entry name" value="Bact_CCA-adding_enz_type3_sf"/>
</dbReference>
<dbReference type="InterPro" id="IPR032810">
    <property type="entry name" value="CCA-adding_enz_C"/>
</dbReference>
<dbReference type="InterPro" id="IPR023068">
    <property type="entry name" value="CCA-adding_enz_firmicutes"/>
</dbReference>
<dbReference type="InterPro" id="IPR043519">
    <property type="entry name" value="NT_sf"/>
</dbReference>
<dbReference type="InterPro" id="IPR002646">
    <property type="entry name" value="PolA_pol_head_dom"/>
</dbReference>
<dbReference type="InterPro" id="IPR032828">
    <property type="entry name" value="PolyA_RNA-bd"/>
</dbReference>
<dbReference type="NCBIfam" id="NF009814">
    <property type="entry name" value="PRK13299.1"/>
    <property type="match status" value="1"/>
</dbReference>
<dbReference type="PANTHER" id="PTHR46173">
    <property type="entry name" value="CCA TRNA NUCLEOTIDYLTRANSFERASE 1, MITOCHONDRIAL"/>
    <property type="match status" value="1"/>
</dbReference>
<dbReference type="PANTHER" id="PTHR46173:SF1">
    <property type="entry name" value="CCA TRNA NUCLEOTIDYLTRANSFERASE 1, MITOCHONDRIAL"/>
    <property type="match status" value="1"/>
</dbReference>
<dbReference type="Pfam" id="PF01743">
    <property type="entry name" value="PolyA_pol"/>
    <property type="match status" value="1"/>
</dbReference>
<dbReference type="Pfam" id="PF12627">
    <property type="entry name" value="PolyA_pol_RNAbd"/>
    <property type="match status" value="1"/>
</dbReference>
<dbReference type="Pfam" id="PF13735">
    <property type="entry name" value="tRNA_NucTran2_2"/>
    <property type="match status" value="1"/>
</dbReference>
<dbReference type="SUPFAM" id="SSF81301">
    <property type="entry name" value="Nucleotidyltransferase"/>
    <property type="match status" value="1"/>
</dbReference>
<dbReference type="SUPFAM" id="SSF81891">
    <property type="entry name" value="Poly A polymerase C-terminal region-like"/>
    <property type="match status" value="1"/>
</dbReference>